<keyword id="KW-0694">RNA-binding</keyword>
<keyword id="KW-0346">Stress response</keyword>
<gene>
    <name evidence="1" type="primary">hfq</name>
    <name type="ordered locus">Sbal195_3893</name>
</gene>
<feature type="chain" id="PRO_1000080688" description="RNA-binding protein Hfq">
    <location>
        <begin position="1"/>
        <end position="90"/>
    </location>
</feature>
<feature type="domain" description="Sm" evidence="2">
    <location>
        <begin position="9"/>
        <end position="68"/>
    </location>
</feature>
<sequence>MAKGQSLQDPFLNALRRERVPVSIYLVNGIKLQGQVESFDQFVILLKNTVSQMVYKHAISTVVPARPFNVTGHQNAQGGYGAQDDAPSGE</sequence>
<reference key="1">
    <citation type="submission" date="2007-11" db="EMBL/GenBank/DDBJ databases">
        <title>Complete sequence of chromosome of Shewanella baltica OS195.</title>
        <authorList>
            <consortium name="US DOE Joint Genome Institute"/>
            <person name="Copeland A."/>
            <person name="Lucas S."/>
            <person name="Lapidus A."/>
            <person name="Barry K."/>
            <person name="Glavina del Rio T."/>
            <person name="Dalin E."/>
            <person name="Tice H."/>
            <person name="Pitluck S."/>
            <person name="Chain P."/>
            <person name="Malfatti S."/>
            <person name="Shin M."/>
            <person name="Vergez L."/>
            <person name="Schmutz J."/>
            <person name="Larimer F."/>
            <person name="Land M."/>
            <person name="Hauser L."/>
            <person name="Kyrpides N."/>
            <person name="Kim E."/>
            <person name="Brettar I."/>
            <person name="Rodrigues J."/>
            <person name="Konstantinidis K."/>
            <person name="Klappenbach J."/>
            <person name="Hofle M."/>
            <person name="Tiedje J."/>
            <person name="Richardson P."/>
        </authorList>
    </citation>
    <scope>NUCLEOTIDE SEQUENCE [LARGE SCALE GENOMIC DNA]</scope>
    <source>
        <strain>OS195</strain>
    </source>
</reference>
<evidence type="ECO:0000255" key="1">
    <source>
        <dbReference type="HAMAP-Rule" id="MF_00436"/>
    </source>
</evidence>
<evidence type="ECO:0000255" key="2">
    <source>
        <dbReference type="PROSITE-ProRule" id="PRU01346"/>
    </source>
</evidence>
<protein>
    <recommendedName>
        <fullName evidence="1">RNA-binding protein Hfq</fullName>
    </recommendedName>
</protein>
<proteinExistence type="inferred from homology"/>
<organism>
    <name type="scientific">Shewanella baltica (strain OS195)</name>
    <dbReference type="NCBI Taxonomy" id="399599"/>
    <lineage>
        <taxon>Bacteria</taxon>
        <taxon>Pseudomonadati</taxon>
        <taxon>Pseudomonadota</taxon>
        <taxon>Gammaproteobacteria</taxon>
        <taxon>Alteromonadales</taxon>
        <taxon>Shewanellaceae</taxon>
        <taxon>Shewanella</taxon>
    </lineage>
</organism>
<comment type="function">
    <text evidence="1">RNA chaperone that binds small regulatory RNA (sRNAs) and mRNAs to facilitate mRNA translational regulation in response to envelope stress, environmental stress and changes in metabolite concentrations. Also binds with high specificity to tRNAs.</text>
</comment>
<comment type="subunit">
    <text evidence="1">Homohexamer.</text>
</comment>
<comment type="similarity">
    <text evidence="1">Belongs to the Hfq family.</text>
</comment>
<accession>A9L3V9</accession>
<dbReference type="EMBL" id="CP000891">
    <property type="protein sequence ID" value="ABX51053.1"/>
    <property type="molecule type" value="Genomic_DNA"/>
</dbReference>
<dbReference type="RefSeq" id="WP_006084207.1">
    <property type="nucleotide sequence ID" value="NC_009997.1"/>
</dbReference>
<dbReference type="SMR" id="A9L3V9"/>
<dbReference type="GeneID" id="11773899"/>
<dbReference type="KEGG" id="sbn:Sbal195_3893"/>
<dbReference type="HOGENOM" id="CLU_113688_2_2_6"/>
<dbReference type="Proteomes" id="UP000000770">
    <property type="component" value="Chromosome"/>
</dbReference>
<dbReference type="GO" id="GO:0005829">
    <property type="term" value="C:cytosol"/>
    <property type="evidence" value="ECO:0007669"/>
    <property type="project" value="TreeGrafter"/>
</dbReference>
<dbReference type="GO" id="GO:0003723">
    <property type="term" value="F:RNA binding"/>
    <property type="evidence" value="ECO:0007669"/>
    <property type="project" value="UniProtKB-UniRule"/>
</dbReference>
<dbReference type="GO" id="GO:0006355">
    <property type="term" value="P:regulation of DNA-templated transcription"/>
    <property type="evidence" value="ECO:0007669"/>
    <property type="project" value="InterPro"/>
</dbReference>
<dbReference type="GO" id="GO:0043487">
    <property type="term" value="P:regulation of RNA stability"/>
    <property type="evidence" value="ECO:0007669"/>
    <property type="project" value="TreeGrafter"/>
</dbReference>
<dbReference type="GO" id="GO:0045974">
    <property type="term" value="P:regulation of translation, ncRNA-mediated"/>
    <property type="evidence" value="ECO:0007669"/>
    <property type="project" value="TreeGrafter"/>
</dbReference>
<dbReference type="CDD" id="cd01716">
    <property type="entry name" value="Hfq"/>
    <property type="match status" value="1"/>
</dbReference>
<dbReference type="FunFam" id="2.30.30.100:FF:000001">
    <property type="entry name" value="RNA-binding protein Hfq"/>
    <property type="match status" value="1"/>
</dbReference>
<dbReference type="Gene3D" id="2.30.30.100">
    <property type="match status" value="1"/>
</dbReference>
<dbReference type="HAMAP" id="MF_00436">
    <property type="entry name" value="Hfq"/>
    <property type="match status" value="1"/>
</dbReference>
<dbReference type="InterPro" id="IPR005001">
    <property type="entry name" value="Hfq"/>
</dbReference>
<dbReference type="InterPro" id="IPR010920">
    <property type="entry name" value="LSM_dom_sf"/>
</dbReference>
<dbReference type="InterPro" id="IPR047575">
    <property type="entry name" value="Sm"/>
</dbReference>
<dbReference type="NCBIfam" id="TIGR02383">
    <property type="entry name" value="Hfq"/>
    <property type="match status" value="1"/>
</dbReference>
<dbReference type="NCBIfam" id="NF001602">
    <property type="entry name" value="PRK00395.1"/>
    <property type="match status" value="1"/>
</dbReference>
<dbReference type="PANTHER" id="PTHR34772">
    <property type="entry name" value="RNA-BINDING PROTEIN HFQ"/>
    <property type="match status" value="1"/>
</dbReference>
<dbReference type="PANTHER" id="PTHR34772:SF1">
    <property type="entry name" value="RNA-BINDING PROTEIN HFQ"/>
    <property type="match status" value="1"/>
</dbReference>
<dbReference type="Pfam" id="PF17209">
    <property type="entry name" value="Hfq"/>
    <property type="match status" value="1"/>
</dbReference>
<dbReference type="SUPFAM" id="SSF50182">
    <property type="entry name" value="Sm-like ribonucleoproteins"/>
    <property type="match status" value="1"/>
</dbReference>
<dbReference type="PROSITE" id="PS52002">
    <property type="entry name" value="SM"/>
    <property type="match status" value="1"/>
</dbReference>
<name>HFQ_SHEB9</name>